<name>SEPF_MYCTU</name>
<organism>
    <name type="scientific">Mycobacterium tuberculosis (strain ATCC 25618 / H37Rv)</name>
    <dbReference type="NCBI Taxonomy" id="83332"/>
    <lineage>
        <taxon>Bacteria</taxon>
        <taxon>Bacillati</taxon>
        <taxon>Actinomycetota</taxon>
        <taxon>Actinomycetes</taxon>
        <taxon>Mycobacteriales</taxon>
        <taxon>Mycobacteriaceae</taxon>
        <taxon>Mycobacterium</taxon>
        <taxon>Mycobacterium tuberculosis complex</taxon>
    </lineage>
</organism>
<sequence length="218" mass="25028">MSTLHKVKAYFGMAPMEDYDDEYYDDRAPSRGYARPRFDDDYGRYDGRDYDDARSDSRGDLRGEPADYPPPGYRGGYADEPRFRPREFDRAEMTRPRFGSWLRNSTRGALAMDPRRMAMMFEDGHPLSKITTLRPKDYSEARTIGERFRDGSPVIMDLVSMDNADAKRLVDFAAGLAFALRGSFDKVATKVFLLSPADVDVSPEERRRIAETGFYAYQ</sequence>
<protein>
    <recommendedName>
        <fullName evidence="1">Cell division protein SepF</fullName>
    </recommendedName>
</protein>
<keyword id="KW-0131">Cell cycle</keyword>
<keyword id="KW-0132">Cell division</keyword>
<keyword id="KW-0963">Cytoplasm</keyword>
<keyword id="KW-1185">Reference proteome</keyword>
<keyword id="KW-0717">Septation</keyword>
<proteinExistence type="evidence at protein level"/>
<gene>
    <name evidence="1" type="primary">sepF</name>
    <name type="ordered locus">Rv2147c</name>
</gene>
<evidence type="ECO:0000255" key="1">
    <source>
        <dbReference type="HAMAP-Rule" id="MF_01197"/>
    </source>
</evidence>
<evidence type="ECO:0000256" key="2">
    <source>
        <dbReference type="SAM" id="MobiDB-lite"/>
    </source>
</evidence>
<evidence type="ECO:0000269" key="3">
    <source>
    </source>
</evidence>
<evidence type="ECO:0000305" key="4"/>
<comment type="function">
    <text evidence="1 3">Cell division protein that is part of the divisome complex and is recruited early to the Z-ring. Probably stimulates Z-ring formation, perhaps through the cross-linking of FtsZ protofilaments. Its function overlaps with FtsA.</text>
</comment>
<comment type="activity regulation">
    <text evidence="3">Inhibited by 1-{4-[2-hydroxy-3-(naphthalen-2-yloxy)propyl]-1,4-diazepan-1-yl}-3-(naphthalen-2-yloxy)propan-2-ol (also known as compound T0349); the binding of this compound blocks its interaction with FtsZ.</text>
</comment>
<comment type="subunit">
    <text evidence="1 3">Homodimer. Interacts with FtsZ.</text>
</comment>
<comment type="subcellular location">
    <subcellularLocation>
        <location evidence="1">Cytoplasm</location>
    </subcellularLocation>
    <text evidence="1">Localizes to the division site, in a FtsZ-dependent manner.</text>
</comment>
<comment type="similarity">
    <text evidence="1">Belongs to the SepF family.</text>
</comment>
<comment type="sequence caution" evidence="4">
    <conflict type="erroneous initiation">
        <sequence resource="EMBL-CDS" id="CCP44923"/>
    </conflict>
    <text>Extended N-terminus.</text>
</comment>
<accession>P9WGJ5</accession>
<accession>L0TAB8</accession>
<accession>O06229</accession>
<accession>Q7D7G2</accession>
<reference key="1">
    <citation type="journal article" date="1998" name="Nature">
        <title>Deciphering the biology of Mycobacterium tuberculosis from the complete genome sequence.</title>
        <authorList>
            <person name="Cole S.T."/>
            <person name="Brosch R."/>
            <person name="Parkhill J."/>
            <person name="Garnier T."/>
            <person name="Churcher C.M."/>
            <person name="Harris D.E."/>
            <person name="Gordon S.V."/>
            <person name="Eiglmeier K."/>
            <person name="Gas S."/>
            <person name="Barry C.E. III"/>
            <person name="Tekaia F."/>
            <person name="Badcock K."/>
            <person name="Basham D."/>
            <person name="Brown D."/>
            <person name="Chillingworth T."/>
            <person name="Connor R."/>
            <person name="Davies R.M."/>
            <person name="Devlin K."/>
            <person name="Feltwell T."/>
            <person name="Gentles S."/>
            <person name="Hamlin N."/>
            <person name="Holroyd S."/>
            <person name="Hornsby T."/>
            <person name="Jagels K."/>
            <person name="Krogh A."/>
            <person name="McLean J."/>
            <person name="Moule S."/>
            <person name="Murphy L.D."/>
            <person name="Oliver S."/>
            <person name="Osborne J."/>
            <person name="Quail M.A."/>
            <person name="Rajandream M.A."/>
            <person name="Rogers J."/>
            <person name="Rutter S."/>
            <person name="Seeger K."/>
            <person name="Skelton S."/>
            <person name="Squares S."/>
            <person name="Squares R."/>
            <person name="Sulston J.E."/>
            <person name="Taylor K."/>
            <person name="Whitehead S."/>
            <person name="Barrell B.G."/>
        </authorList>
    </citation>
    <scope>NUCLEOTIDE SEQUENCE [LARGE SCALE GENOMIC DNA]</scope>
    <source>
        <strain>ATCC 25618 / H37Rv</strain>
    </source>
</reference>
<reference key="2">
    <citation type="journal article" date="2011" name="Mol. Cell. Proteomics">
        <title>Proteogenomic analysis of Mycobacterium tuberculosis by high resolution mass spectrometry.</title>
        <authorList>
            <person name="Kelkar D.S."/>
            <person name="Kumar D."/>
            <person name="Kumar P."/>
            <person name="Balakrishnan L."/>
            <person name="Muthusamy B."/>
            <person name="Yadav A.K."/>
            <person name="Shrivastava P."/>
            <person name="Marimuthu A."/>
            <person name="Anand S."/>
            <person name="Sundaram H."/>
            <person name="Kingsbury R."/>
            <person name="Harsha H.C."/>
            <person name="Nair B."/>
            <person name="Prasad T.S."/>
            <person name="Chauhan D.S."/>
            <person name="Katoch K."/>
            <person name="Katoch V.M."/>
            <person name="Kumar P."/>
            <person name="Chaerkady R."/>
            <person name="Ramachandran S."/>
            <person name="Dash D."/>
            <person name="Pandey A."/>
        </authorList>
    </citation>
    <scope>IDENTIFICATION BY MASS SPECTROMETRY [LARGE SCALE ANALYSIS]</scope>
    <source>
        <strain>ATCC 25618 / H37Rv</strain>
    </source>
</reference>
<reference key="3">
    <citation type="journal article" date="2023" name="Acta Pharm. Sin. B (APSB)">
        <title>Identification of anti-Mycobacterium tuberculosis agents targeting the interaction of bacterial division proteins FtsZ and SepF.</title>
        <authorList>
            <person name="Zhang H."/>
            <person name="Chen Y."/>
            <person name="Zhang Y."/>
            <person name="Qiao L."/>
            <person name="Chi X."/>
            <person name="Han Y."/>
            <person name="Lin Y."/>
            <person name="Si S."/>
            <person name="Jiang J."/>
        </authorList>
    </citation>
    <scope>FUNCTION</scope>
    <scope>ACTIVITY REGULATION</scope>
    <scope>INTERACTION WITH FTSZ</scope>
</reference>
<reference key="4">
    <citation type="journal article" date="2023" name="Acta Pharm. Sin. B (APSB)">
        <authorList>
            <person name="Zhang H."/>
            <person name="Chen Y."/>
            <person name="Zhang Y."/>
            <person name="Qiao L."/>
            <person name="Chi X."/>
            <person name="Han Y."/>
            <person name="Lin Y."/>
            <person name="Si S."/>
            <person name="Jiang J."/>
        </authorList>
    </citation>
    <scope>ERRATUM OF PUBMED:37250168</scope>
</reference>
<feature type="chain" id="PRO_0000334047" description="Cell division protein SepF">
    <location>
        <begin position="1"/>
        <end position="218"/>
    </location>
</feature>
<feature type="region of interest" description="Disordered" evidence="2">
    <location>
        <begin position="20"/>
        <end position="81"/>
    </location>
</feature>
<feature type="region of interest" description="Interaction with ftsZ" evidence="3">
    <location>
        <begin position="115"/>
        <end position="203"/>
    </location>
</feature>
<feature type="compositionally biased region" description="Basic and acidic residues" evidence="2">
    <location>
        <begin position="36"/>
        <end position="65"/>
    </location>
</feature>
<dbReference type="EMBL" id="AL123456">
    <property type="protein sequence ID" value="CCP44923.1"/>
    <property type="status" value="ALT_INIT"/>
    <property type="molecule type" value="Genomic_DNA"/>
</dbReference>
<dbReference type="PIR" id="G70578">
    <property type="entry name" value="G70578"/>
</dbReference>
<dbReference type="RefSeq" id="NP_216663.1">
    <property type="nucleotide sequence ID" value="NC_000962.3"/>
</dbReference>
<dbReference type="RefSeq" id="WP_003411133.1">
    <property type="nucleotide sequence ID" value="NZ_NVQJ01000044.1"/>
</dbReference>
<dbReference type="RefSeq" id="WP_003899187.1">
    <property type="nucleotide sequence ID" value="NC_000962.3"/>
</dbReference>
<dbReference type="SMR" id="P9WGJ5"/>
<dbReference type="STRING" id="83332.Rv2147c"/>
<dbReference type="PaxDb" id="83332-Rv2147c"/>
<dbReference type="DNASU" id="887394"/>
<dbReference type="GeneID" id="45426125"/>
<dbReference type="GeneID" id="887394"/>
<dbReference type="KEGG" id="mtu:Rv2147c"/>
<dbReference type="PATRIC" id="fig|83332.12.peg.2398"/>
<dbReference type="TubercuList" id="Rv2147c"/>
<dbReference type="eggNOG" id="COG1799">
    <property type="taxonomic scope" value="Bacteria"/>
</dbReference>
<dbReference type="InParanoid" id="P9WGJ5"/>
<dbReference type="OrthoDB" id="3731101at2"/>
<dbReference type="Proteomes" id="UP000001584">
    <property type="component" value="Chromosome"/>
</dbReference>
<dbReference type="GO" id="GO:0005737">
    <property type="term" value="C:cytoplasm"/>
    <property type="evidence" value="ECO:0007669"/>
    <property type="project" value="UniProtKB-SubCell"/>
</dbReference>
<dbReference type="GO" id="GO:0005886">
    <property type="term" value="C:plasma membrane"/>
    <property type="evidence" value="ECO:0007005"/>
    <property type="project" value="MTBBASE"/>
</dbReference>
<dbReference type="GO" id="GO:0000917">
    <property type="term" value="P:division septum assembly"/>
    <property type="evidence" value="ECO:0007669"/>
    <property type="project" value="UniProtKB-KW"/>
</dbReference>
<dbReference type="GO" id="GO:0043093">
    <property type="term" value="P:FtsZ-dependent cytokinesis"/>
    <property type="evidence" value="ECO:0007669"/>
    <property type="project" value="UniProtKB-UniRule"/>
</dbReference>
<dbReference type="FunFam" id="3.30.110.150:FF:000001">
    <property type="entry name" value="Cell division protein SepF"/>
    <property type="match status" value="1"/>
</dbReference>
<dbReference type="Gene3D" id="3.30.110.150">
    <property type="entry name" value="SepF-like protein"/>
    <property type="match status" value="1"/>
</dbReference>
<dbReference type="HAMAP" id="MF_01197">
    <property type="entry name" value="SepF"/>
    <property type="match status" value="1"/>
</dbReference>
<dbReference type="InterPro" id="IPR023052">
    <property type="entry name" value="Cell_div_SepF"/>
</dbReference>
<dbReference type="InterPro" id="IPR007561">
    <property type="entry name" value="Cell_div_SepF/SepF-rel"/>
</dbReference>
<dbReference type="InterPro" id="IPR038594">
    <property type="entry name" value="SepF-like_sf"/>
</dbReference>
<dbReference type="PANTHER" id="PTHR35798">
    <property type="entry name" value="CELL DIVISION PROTEIN SEPF"/>
    <property type="match status" value="1"/>
</dbReference>
<dbReference type="PANTHER" id="PTHR35798:SF1">
    <property type="entry name" value="CELL DIVISION PROTEIN SEPF"/>
    <property type="match status" value="1"/>
</dbReference>
<dbReference type="Pfam" id="PF04472">
    <property type="entry name" value="SepF"/>
    <property type="match status" value="1"/>
</dbReference>